<sequence>MDMDLNNRLTEDETLEQAYDIFLELAADNLDPADVLLFNLQFEERGGAELFDPAEDWQEHVDFDLNPDFFAEVVIGLADSEDGEINDVFARILLCREKDHKLCHIIWRE</sequence>
<keyword id="KW-1185">Reference proteome</keyword>
<protein>
    <recommendedName>
        <fullName evidence="1">Putative double-stranded DNA mimic protein YciU</fullName>
    </recommendedName>
</protein>
<feature type="chain" id="PRO_1000200442" description="Putative double-stranded DNA mimic protein YciU">
    <location>
        <begin position="1"/>
        <end position="109"/>
    </location>
</feature>
<gene>
    <name evidence="1" type="primary">yciU</name>
    <name type="ordered locus">EC55989_1345</name>
</gene>
<reference key="1">
    <citation type="journal article" date="2009" name="PLoS Genet.">
        <title>Organised genome dynamics in the Escherichia coli species results in highly diverse adaptive paths.</title>
        <authorList>
            <person name="Touchon M."/>
            <person name="Hoede C."/>
            <person name="Tenaillon O."/>
            <person name="Barbe V."/>
            <person name="Baeriswyl S."/>
            <person name="Bidet P."/>
            <person name="Bingen E."/>
            <person name="Bonacorsi S."/>
            <person name="Bouchier C."/>
            <person name="Bouvet O."/>
            <person name="Calteau A."/>
            <person name="Chiapello H."/>
            <person name="Clermont O."/>
            <person name="Cruveiller S."/>
            <person name="Danchin A."/>
            <person name="Diard M."/>
            <person name="Dossat C."/>
            <person name="Karoui M.E."/>
            <person name="Frapy E."/>
            <person name="Garry L."/>
            <person name="Ghigo J.M."/>
            <person name="Gilles A.M."/>
            <person name="Johnson J."/>
            <person name="Le Bouguenec C."/>
            <person name="Lescat M."/>
            <person name="Mangenot S."/>
            <person name="Martinez-Jehanne V."/>
            <person name="Matic I."/>
            <person name="Nassif X."/>
            <person name="Oztas S."/>
            <person name="Petit M.A."/>
            <person name="Pichon C."/>
            <person name="Rouy Z."/>
            <person name="Ruf C.S."/>
            <person name="Schneider D."/>
            <person name="Tourret J."/>
            <person name="Vacherie B."/>
            <person name="Vallenet D."/>
            <person name="Medigue C."/>
            <person name="Rocha E.P.C."/>
            <person name="Denamur E."/>
        </authorList>
    </citation>
    <scope>NUCLEOTIDE SEQUENCE [LARGE SCALE GENOMIC DNA]</scope>
    <source>
        <strain>55989 / EAEC</strain>
    </source>
</reference>
<evidence type="ECO:0000255" key="1">
    <source>
        <dbReference type="HAMAP-Rule" id="MF_00680"/>
    </source>
</evidence>
<dbReference type="EMBL" id="CU928145">
    <property type="protein sequence ID" value="CAU97203.1"/>
    <property type="molecule type" value="Genomic_DNA"/>
</dbReference>
<dbReference type="RefSeq" id="WP_000366959.1">
    <property type="nucleotide sequence ID" value="NZ_CP028304.1"/>
</dbReference>
<dbReference type="SMR" id="B7LHJ3"/>
<dbReference type="KEGG" id="eck:EC55989_1345"/>
<dbReference type="HOGENOM" id="CLU_143392_0_0_6"/>
<dbReference type="Proteomes" id="UP000000746">
    <property type="component" value="Chromosome"/>
</dbReference>
<dbReference type="Gene3D" id="3.10.450.140">
    <property type="entry name" value="dsDNA mimic, putative"/>
    <property type="match status" value="1"/>
</dbReference>
<dbReference type="HAMAP" id="MF_00680">
    <property type="entry name" value="Put_dsDNA_mimic"/>
    <property type="match status" value="1"/>
</dbReference>
<dbReference type="InterPro" id="IPR007376">
    <property type="entry name" value="dsDNA_mimic_put"/>
</dbReference>
<dbReference type="InterPro" id="IPR036763">
    <property type="entry name" value="Put_dsDNA_mimic_sf"/>
</dbReference>
<dbReference type="NCBIfam" id="NF003469">
    <property type="entry name" value="PRK05094.1"/>
    <property type="match status" value="1"/>
</dbReference>
<dbReference type="Pfam" id="PF04269">
    <property type="entry name" value="DUF440"/>
    <property type="match status" value="1"/>
</dbReference>
<dbReference type="PIRSF" id="PIRSF004916">
    <property type="entry name" value="UCP004916"/>
    <property type="match status" value="1"/>
</dbReference>
<dbReference type="SUPFAM" id="SSF102816">
    <property type="entry name" value="Putative dsDNA mimic"/>
    <property type="match status" value="1"/>
</dbReference>
<name>YCIU_ECO55</name>
<accession>B7LHJ3</accession>
<comment type="function">
    <text evidence="1">May act as a double-stranded DNA (dsDNA) mimic. Probably regulates the activity of a dsDNA-binding protein.</text>
</comment>
<comment type="similarity">
    <text evidence="1">Belongs to the putative dsDNA mimic protein family.</text>
</comment>
<organism>
    <name type="scientific">Escherichia coli (strain 55989 / EAEC)</name>
    <dbReference type="NCBI Taxonomy" id="585055"/>
    <lineage>
        <taxon>Bacteria</taxon>
        <taxon>Pseudomonadati</taxon>
        <taxon>Pseudomonadota</taxon>
        <taxon>Gammaproteobacteria</taxon>
        <taxon>Enterobacterales</taxon>
        <taxon>Enterobacteriaceae</taxon>
        <taxon>Escherichia</taxon>
    </lineage>
</organism>
<proteinExistence type="inferred from homology"/>